<keyword id="KW-0227">DNA damage</keyword>
<keyword id="KW-0234">DNA repair</keyword>
<keyword id="KW-0255">Endonuclease</keyword>
<keyword id="KW-0378">Hydrolase</keyword>
<keyword id="KW-0479">Metal-binding</keyword>
<keyword id="KW-0540">Nuclease</keyword>
<keyword id="KW-0862">Zinc</keyword>
<gene>
    <name evidence="1" type="primary">nfo</name>
    <name type="ordered locus">EcolC_1489</name>
</gene>
<evidence type="ECO:0000255" key="1">
    <source>
        <dbReference type="HAMAP-Rule" id="MF_00152"/>
    </source>
</evidence>
<comment type="function">
    <text evidence="1">Endonuclease IV plays a role in DNA repair. It cleaves phosphodiester bonds at apurinic or apyrimidinic (AP) sites, generating a 3'-hydroxyl group and a 5'-terminal sugar phosphate.</text>
</comment>
<comment type="catalytic activity">
    <reaction evidence="1">
        <text>Endonucleolytic cleavage to 5'-phosphooligonucleotide end-products.</text>
        <dbReference type="EC" id="3.1.21.2"/>
    </reaction>
</comment>
<comment type="cofactor">
    <cofactor evidence="1">
        <name>Zn(2+)</name>
        <dbReference type="ChEBI" id="CHEBI:29105"/>
    </cofactor>
    <text evidence="1">Binds 3 Zn(2+) ions.</text>
</comment>
<comment type="similarity">
    <text evidence="1">Belongs to the AP endonuclease 2 family.</text>
</comment>
<protein>
    <recommendedName>
        <fullName evidence="1">Probable endonuclease 4</fullName>
        <ecNumber evidence="1">3.1.21.2</ecNumber>
    </recommendedName>
    <alternativeName>
        <fullName evidence="1">Endodeoxyribonuclease IV</fullName>
    </alternativeName>
    <alternativeName>
        <fullName evidence="1">Endonuclease IV</fullName>
    </alternativeName>
</protein>
<sequence length="285" mass="31492">MKYIGAHVSAAGGLANAAIRAAEIDATAFALFTKNQRQWRAAPLTTQTIDEFKAACEKYHYTSAQILPHDSYLINLGHPVTEALEKSRDAFIDEMQRCEQLGLSLLNFHPGSHLMQISEEDCLARIAESINIALDKTQGVTAVIENTAGQGSNLGFKFEHLAAIIDGVEDKSRVGVCIDTCHAFAAGYDLRTPAECEKTFADFARIVGFKYLRGMHLNDAKSTFGSRVDRHHSLGEGNIGHDAFRWIMQDDRFDGIPLILETINPDIWAEEIAWLKAQQTEKAVA</sequence>
<feature type="chain" id="PRO_1000076804" description="Probable endonuclease 4">
    <location>
        <begin position="1"/>
        <end position="285"/>
    </location>
</feature>
<feature type="binding site" evidence="1">
    <location>
        <position position="69"/>
    </location>
    <ligand>
        <name>Zn(2+)</name>
        <dbReference type="ChEBI" id="CHEBI:29105"/>
        <label>1</label>
    </ligand>
</feature>
<feature type="binding site" evidence="1">
    <location>
        <position position="109"/>
    </location>
    <ligand>
        <name>Zn(2+)</name>
        <dbReference type="ChEBI" id="CHEBI:29105"/>
        <label>1</label>
    </ligand>
</feature>
<feature type="binding site" evidence="1">
    <location>
        <position position="145"/>
    </location>
    <ligand>
        <name>Zn(2+)</name>
        <dbReference type="ChEBI" id="CHEBI:29105"/>
        <label>1</label>
    </ligand>
</feature>
<feature type="binding site" evidence="1">
    <location>
        <position position="145"/>
    </location>
    <ligand>
        <name>Zn(2+)</name>
        <dbReference type="ChEBI" id="CHEBI:29105"/>
        <label>2</label>
    </ligand>
</feature>
<feature type="binding site" evidence="1">
    <location>
        <position position="179"/>
    </location>
    <ligand>
        <name>Zn(2+)</name>
        <dbReference type="ChEBI" id="CHEBI:29105"/>
        <label>2</label>
    </ligand>
</feature>
<feature type="binding site" evidence="1">
    <location>
        <position position="182"/>
    </location>
    <ligand>
        <name>Zn(2+)</name>
        <dbReference type="ChEBI" id="CHEBI:29105"/>
        <label>3</label>
    </ligand>
</feature>
<feature type="binding site" evidence="1">
    <location>
        <position position="216"/>
    </location>
    <ligand>
        <name>Zn(2+)</name>
        <dbReference type="ChEBI" id="CHEBI:29105"/>
        <label>2</label>
    </ligand>
</feature>
<feature type="binding site" evidence="1">
    <location>
        <position position="229"/>
    </location>
    <ligand>
        <name>Zn(2+)</name>
        <dbReference type="ChEBI" id="CHEBI:29105"/>
        <label>3</label>
    </ligand>
</feature>
<feature type="binding site" evidence="1">
    <location>
        <position position="231"/>
    </location>
    <ligand>
        <name>Zn(2+)</name>
        <dbReference type="ChEBI" id="CHEBI:29105"/>
        <label>3</label>
    </ligand>
</feature>
<feature type="binding site" evidence="1">
    <location>
        <position position="261"/>
    </location>
    <ligand>
        <name>Zn(2+)</name>
        <dbReference type="ChEBI" id="CHEBI:29105"/>
        <label>2</label>
    </ligand>
</feature>
<organism>
    <name type="scientific">Escherichia coli (strain ATCC 8739 / DSM 1576 / NBRC 3972 / NCIMB 8545 / WDCM 00012 / Crooks)</name>
    <dbReference type="NCBI Taxonomy" id="481805"/>
    <lineage>
        <taxon>Bacteria</taxon>
        <taxon>Pseudomonadati</taxon>
        <taxon>Pseudomonadota</taxon>
        <taxon>Gammaproteobacteria</taxon>
        <taxon>Enterobacterales</taxon>
        <taxon>Enterobacteriaceae</taxon>
        <taxon>Escherichia</taxon>
    </lineage>
</organism>
<dbReference type="EC" id="3.1.21.2" evidence="1"/>
<dbReference type="EMBL" id="CP000946">
    <property type="protein sequence ID" value="ACA77151.1"/>
    <property type="molecule type" value="Genomic_DNA"/>
</dbReference>
<dbReference type="RefSeq" id="WP_000873890.1">
    <property type="nucleotide sequence ID" value="NZ_MTFT01000031.1"/>
</dbReference>
<dbReference type="SMR" id="B1IYB0"/>
<dbReference type="GeneID" id="93775023"/>
<dbReference type="KEGG" id="ecl:EcolC_1489"/>
<dbReference type="HOGENOM" id="CLU_025885_0_4_6"/>
<dbReference type="GO" id="GO:0008833">
    <property type="term" value="F:deoxyribonuclease IV (phage-T4-induced) activity"/>
    <property type="evidence" value="ECO:0007669"/>
    <property type="project" value="UniProtKB-UniRule"/>
</dbReference>
<dbReference type="GO" id="GO:0003677">
    <property type="term" value="F:DNA binding"/>
    <property type="evidence" value="ECO:0007669"/>
    <property type="project" value="InterPro"/>
</dbReference>
<dbReference type="GO" id="GO:0003906">
    <property type="term" value="F:DNA-(apurinic or apyrimidinic site) endonuclease activity"/>
    <property type="evidence" value="ECO:0007669"/>
    <property type="project" value="TreeGrafter"/>
</dbReference>
<dbReference type="GO" id="GO:0008081">
    <property type="term" value="F:phosphoric diester hydrolase activity"/>
    <property type="evidence" value="ECO:0007669"/>
    <property type="project" value="TreeGrafter"/>
</dbReference>
<dbReference type="GO" id="GO:0008270">
    <property type="term" value="F:zinc ion binding"/>
    <property type="evidence" value="ECO:0007669"/>
    <property type="project" value="UniProtKB-UniRule"/>
</dbReference>
<dbReference type="GO" id="GO:0006284">
    <property type="term" value="P:base-excision repair"/>
    <property type="evidence" value="ECO:0007669"/>
    <property type="project" value="TreeGrafter"/>
</dbReference>
<dbReference type="CDD" id="cd00019">
    <property type="entry name" value="AP2Ec"/>
    <property type="match status" value="1"/>
</dbReference>
<dbReference type="FunFam" id="3.20.20.150:FF:000001">
    <property type="entry name" value="Probable endonuclease 4"/>
    <property type="match status" value="1"/>
</dbReference>
<dbReference type="Gene3D" id="3.20.20.150">
    <property type="entry name" value="Divalent-metal-dependent TIM barrel enzymes"/>
    <property type="match status" value="1"/>
</dbReference>
<dbReference type="HAMAP" id="MF_00152">
    <property type="entry name" value="Nfo"/>
    <property type="match status" value="1"/>
</dbReference>
<dbReference type="InterPro" id="IPR001719">
    <property type="entry name" value="AP_endonuc_2"/>
</dbReference>
<dbReference type="InterPro" id="IPR018246">
    <property type="entry name" value="AP_endonuc_F2_Zn_BS"/>
</dbReference>
<dbReference type="InterPro" id="IPR036237">
    <property type="entry name" value="Xyl_isomerase-like_sf"/>
</dbReference>
<dbReference type="InterPro" id="IPR013022">
    <property type="entry name" value="Xyl_isomerase-like_TIM-brl"/>
</dbReference>
<dbReference type="NCBIfam" id="TIGR00587">
    <property type="entry name" value="nfo"/>
    <property type="match status" value="1"/>
</dbReference>
<dbReference type="NCBIfam" id="NF002199">
    <property type="entry name" value="PRK01060.1-4"/>
    <property type="match status" value="1"/>
</dbReference>
<dbReference type="PANTHER" id="PTHR21445:SF0">
    <property type="entry name" value="APURINIC-APYRIMIDINIC ENDONUCLEASE"/>
    <property type="match status" value="1"/>
</dbReference>
<dbReference type="PANTHER" id="PTHR21445">
    <property type="entry name" value="ENDONUCLEASE IV ENDODEOXYRIBONUCLEASE IV"/>
    <property type="match status" value="1"/>
</dbReference>
<dbReference type="Pfam" id="PF01261">
    <property type="entry name" value="AP_endonuc_2"/>
    <property type="match status" value="1"/>
</dbReference>
<dbReference type="SMART" id="SM00518">
    <property type="entry name" value="AP2Ec"/>
    <property type="match status" value="1"/>
</dbReference>
<dbReference type="SUPFAM" id="SSF51658">
    <property type="entry name" value="Xylose isomerase-like"/>
    <property type="match status" value="1"/>
</dbReference>
<dbReference type="PROSITE" id="PS00729">
    <property type="entry name" value="AP_NUCLEASE_F2_1"/>
    <property type="match status" value="1"/>
</dbReference>
<dbReference type="PROSITE" id="PS00730">
    <property type="entry name" value="AP_NUCLEASE_F2_2"/>
    <property type="match status" value="1"/>
</dbReference>
<dbReference type="PROSITE" id="PS00731">
    <property type="entry name" value="AP_NUCLEASE_F2_3"/>
    <property type="match status" value="1"/>
</dbReference>
<dbReference type="PROSITE" id="PS51432">
    <property type="entry name" value="AP_NUCLEASE_F2_4"/>
    <property type="match status" value="1"/>
</dbReference>
<proteinExistence type="inferred from homology"/>
<name>END4_ECOLC</name>
<accession>B1IYB0</accession>
<reference key="1">
    <citation type="submission" date="2008-02" db="EMBL/GenBank/DDBJ databases">
        <title>Complete sequence of Escherichia coli C str. ATCC 8739.</title>
        <authorList>
            <person name="Copeland A."/>
            <person name="Lucas S."/>
            <person name="Lapidus A."/>
            <person name="Glavina del Rio T."/>
            <person name="Dalin E."/>
            <person name="Tice H."/>
            <person name="Bruce D."/>
            <person name="Goodwin L."/>
            <person name="Pitluck S."/>
            <person name="Kiss H."/>
            <person name="Brettin T."/>
            <person name="Detter J.C."/>
            <person name="Han C."/>
            <person name="Kuske C.R."/>
            <person name="Schmutz J."/>
            <person name="Larimer F."/>
            <person name="Land M."/>
            <person name="Hauser L."/>
            <person name="Kyrpides N."/>
            <person name="Mikhailova N."/>
            <person name="Ingram L."/>
            <person name="Richardson P."/>
        </authorList>
    </citation>
    <scope>NUCLEOTIDE SEQUENCE [LARGE SCALE GENOMIC DNA]</scope>
    <source>
        <strain>ATCC 8739 / DSM 1576 / NBRC 3972 / NCIMB 8545 / WDCM 00012 / Crooks</strain>
    </source>
</reference>